<comment type="function">
    <text evidence="1">Catalyzes the reversible oxidation of malate to oxaloacetate.</text>
</comment>
<comment type="catalytic activity">
    <reaction evidence="1">
        <text>(S)-malate + NAD(+) = oxaloacetate + NADH + H(+)</text>
        <dbReference type="Rhea" id="RHEA:21432"/>
        <dbReference type="ChEBI" id="CHEBI:15378"/>
        <dbReference type="ChEBI" id="CHEBI:15589"/>
        <dbReference type="ChEBI" id="CHEBI:16452"/>
        <dbReference type="ChEBI" id="CHEBI:57540"/>
        <dbReference type="ChEBI" id="CHEBI:57945"/>
        <dbReference type="EC" id="1.1.1.37"/>
    </reaction>
</comment>
<comment type="similarity">
    <text evidence="1">Belongs to the LDH/MDH superfamily. MDH type 3 family.</text>
</comment>
<accession>Q3B2R4</accession>
<protein>
    <recommendedName>
        <fullName evidence="1">Malate dehydrogenase</fullName>
        <ecNumber evidence="1">1.1.1.37</ecNumber>
    </recommendedName>
</protein>
<organism>
    <name type="scientific">Chlorobium luteolum (strain DSM 273 / BCRC 81028 / 2530)</name>
    <name type="common">Pelodictyon luteolum</name>
    <dbReference type="NCBI Taxonomy" id="319225"/>
    <lineage>
        <taxon>Bacteria</taxon>
        <taxon>Pseudomonadati</taxon>
        <taxon>Chlorobiota</taxon>
        <taxon>Chlorobiia</taxon>
        <taxon>Chlorobiales</taxon>
        <taxon>Chlorobiaceae</taxon>
        <taxon>Chlorobium/Pelodictyon group</taxon>
        <taxon>Pelodictyon</taxon>
    </lineage>
</organism>
<evidence type="ECO:0000255" key="1">
    <source>
        <dbReference type="HAMAP-Rule" id="MF_00487"/>
    </source>
</evidence>
<keyword id="KW-0520">NAD</keyword>
<keyword id="KW-0560">Oxidoreductase</keyword>
<keyword id="KW-1185">Reference proteome</keyword>
<keyword id="KW-0816">Tricarboxylic acid cycle</keyword>
<gene>
    <name evidence="1" type="primary">mdh</name>
    <name type="ordered locus">Plut_1510</name>
</gene>
<reference key="1">
    <citation type="submission" date="2005-08" db="EMBL/GenBank/DDBJ databases">
        <title>Complete sequence of Pelodictyon luteolum DSM 273.</title>
        <authorList>
            <consortium name="US DOE Joint Genome Institute"/>
            <person name="Copeland A."/>
            <person name="Lucas S."/>
            <person name="Lapidus A."/>
            <person name="Barry K."/>
            <person name="Detter J.C."/>
            <person name="Glavina T."/>
            <person name="Hammon N."/>
            <person name="Israni S."/>
            <person name="Pitluck S."/>
            <person name="Bryant D."/>
            <person name="Schmutz J."/>
            <person name="Larimer F."/>
            <person name="Land M."/>
            <person name="Kyrpides N."/>
            <person name="Ivanova N."/>
            <person name="Richardson P."/>
        </authorList>
    </citation>
    <scope>NUCLEOTIDE SEQUENCE [LARGE SCALE GENOMIC DNA]</scope>
    <source>
        <strain>DSM 273 / BCRC 81028 / 2530</strain>
    </source>
</reference>
<sequence length="310" mass="33417">MKITVIGAGNVGATAALRIAEKQLAREVVLIDIVEGIPQGKALDMYESGPVALFDTRVSGSNDYRDSADSDIILITAGLARKPGMSREDLLQKNATIIKEVTSQVMQYSKNPILIMVSNPLDVMTYVARQVSGLPEERVIGMAGVLDTARFRSFIAEELQVSMQDINAFVLGGHGDSMVPVVKYTNVAGIPITELMSIEKINAIVERTKNGGIEIVNHLKTGSAFYAPAASAVEMIESIVKDRKRILPCTTCLKGQFGIQNVFCGAPVKLGRKGVEQILEINLSADELKALQQSASIVEQNCRNLDALLG</sequence>
<dbReference type="EC" id="1.1.1.37" evidence="1"/>
<dbReference type="EMBL" id="CP000096">
    <property type="protein sequence ID" value="ABB24367.1"/>
    <property type="molecule type" value="Genomic_DNA"/>
</dbReference>
<dbReference type="RefSeq" id="WP_011358239.1">
    <property type="nucleotide sequence ID" value="NC_007512.1"/>
</dbReference>
<dbReference type="SMR" id="Q3B2R4"/>
<dbReference type="STRING" id="319225.Plut_1510"/>
<dbReference type="KEGG" id="plt:Plut_1510"/>
<dbReference type="eggNOG" id="COG0039">
    <property type="taxonomic scope" value="Bacteria"/>
</dbReference>
<dbReference type="HOGENOM" id="CLU_045401_2_1_10"/>
<dbReference type="OrthoDB" id="9802969at2"/>
<dbReference type="Proteomes" id="UP000002709">
    <property type="component" value="Chromosome"/>
</dbReference>
<dbReference type="GO" id="GO:0004459">
    <property type="term" value="F:L-lactate dehydrogenase activity"/>
    <property type="evidence" value="ECO:0007669"/>
    <property type="project" value="TreeGrafter"/>
</dbReference>
<dbReference type="GO" id="GO:0030060">
    <property type="term" value="F:L-malate dehydrogenase (NAD+) activity"/>
    <property type="evidence" value="ECO:0007669"/>
    <property type="project" value="UniProtKB-UniRule"/>
</dbReference>
<dbReference type="GO" id="GO:0006089">
    <property type="term" value="P:lactate metabolic process"/>
    <property type="evidence" value="ECO:0007669"/>
    <property type="project" value="TreeGrafter"/>
</dbReference>
<dbReference type="GO" id="GO:0006099">
    <property type="term" value="P:tricarboxylic acid cycle"/>
    <property type="evidence" value="ECO:0007669"/>
    <property type="project" value="UniProtKB-UniRule"/>
</dbReference>
<dbReference type="CDD" id="cd01339">
    <property type="entry name" value="LDH-like_MDH"/>
    <property type="match status" value="1"/>
</dbReference>
<dbReference type="FunFam" id="3.40.50.720:FF:000018">
    <property type="entry name" value="Malate dehydrogenase"/>
    <property type="match status" value="1"/>
</dbReference>
<dbReference type="FunFam" id="3.90.110.10:FF:000004">
    <property type="entry name" value="Malate dehydrogenase"/>
    <property type="match status" value="1"/>
</dbReference>
<dbReference type="Gene3D" id="3.90.110.10">
    <property type="entry name" value="Lactate dehydrogenase/glycoside hydrolase, family 4, C-terminal"/>
    <property type="match status" value="1"/>
</dbReference>
<dbReference type="Gene3D" id="3.40.50.720">
    <property type="entry name" value="NAD(P)-binding Rossmann-like Domain"/>
    <property type="match status" value="1"/>
</dbReference>
<dbReference type="HAMAP" id="MF_00487">
    <property type="entry name" value="Malate_dehydrog_3"/>
    <property type="match status" value="1"/>
</dbReference>
<dbReference type="InterPro" id="IPR001557">
    <property type="entry name" value="L-lactate/malate_DH"/>
</dbReference>
<dbReference type="InterPro" id="IPR022383">
    <property type="entry name" value="Lactate/malate_DH_C"/>
</dbReference>
<dbReference type="InterPro" id="IPR001236">
    <property type="entry name" value="Lactate/malate_DH_N"/>
</dbReference>
<dbReference type="InterPro" id="IPR015955">
    <property type="entry name" value="Lactate_DH/Glyco_Ohase_4_C"/>
</dbReference>
<dbReference type="InterPro" id="IPR011275">
    <property type="entry name" value="Malate_DH_type3"/>
</dbReference>
<dbReference type="InterPro" id="IPR036291">
    <property type="entry name" value="NAD(P)-bd_dom_sf"/>
</dbReference>
<dbReference type="NCBIfam" id="TIGR01763">
    <property type="entry name" value="MalateDH_bact"/>
    <property type="match status" value="1"/>
</dbReference>
<dbReference type="NCBIfam" id="NF004863">
    <property type="entry name" value="PRK06223.1"/>
    <property type="match status" value="1"/>
</dbReference>
<dbReference type="PANTHER" id="PTHR43128">
    <property type="entry name" value="L-2-HYDROXYCARBOXYLATE DEHYDROGENASE (NAD(P)(+))"/>
    <property type="match status" value="1"/>
</dbReference>
<dbReference type="PANTHER" id="PTHR43128:SF16">
    <property type="entry name" value="L-LACTATE DEHYDROGENASE"/>
    <property type="match status" value="1"/>
</dbReference>
<dbReference type="Pfam" id="PF02866">
    <property type="entry name" value="Ldh_1_C"/>
    <property type="match status" value="1"/>
</dbReference>
<dbReference type="Pfam" id="PF00056">
    <property type="entry name" value="Ldh_1_N"/>
    <property type="match status" value="1"/>
</dbReference>
<dbReference type="PIRSF" id="PIRSF000102">
    <property type="entry name" value="Lac_mal_DH"/>
    <property type="match status" value="1"/>
</dbReference>
<dbReference type="PRINTS" id="PR00086">
    <property type="entry name" value="LLDHDRGNASE"/>
</dbReference>
<dbReference type="SUPFAM" id="SSF56327">
    <property type="entry name" value="LDH C-terminal domain-like"/>
    <property type="match status" value="1"/>
</dbReference>
<dbReference type="SUPFAM" id="SSF51735">
    <property type="entry name" value="NAD(P)-binding Rossmann-fold domains"/>
    <property type="match status" value="1"/>
</dbReference>
<proteinExistence type="inferred from homology"/>
<feature type="chain" id="PRO_0000241959" description="Malate dehydrogenase">
    <location>
        <begin position="1"/>
        <end position="310"/>
    </location>
</feature>
<feature type="active site" description="Proton acceptor" evidence="1">
    <location>
        <position position="174"/>
    </location>
</feature>
<feature type="binding site" evidence="1">
    <location>
        <begin position="7"/>
        <end position="12"/>
    </location>
    <ligand>
        <name>NAD(+)</name>
        <dbReference type="ChEBI" id="CHEBI:57540"/>
    </ligand>
</feature>
<feature type="binding site" evidence="1">
    <location>
        <position position="32"/>
    </location>
    <ligand>
        <name>NAD(+)</name>
        <dbReference type="ChEBI" id="CHEBI:57540"/>
    </ligand>
</feature>
<feature type="binding site" evidence="1">
    <location>
        <position position="81"/>
    </location>
    <ligand>
        <name>substrate</name>
    </ligand>
</feature>
<feature type="binding site" evidence="1">
    <location>
        <position position="87"/>
    </location>
    <ligand>
        <name>substrate</name>
    </ligand>
</feature>
<feature type="binding site" evidence="1">
    <location>
        <position position="94"/>
    </location>
    <ligand>
        <name>NAD(+)</name>
        <dbReference type="ChEBI" id="CHEBI:57540"/>
    </ligand>
</feature>
<feature type="binding site" evidence="1">
    <location>
        <begin position="117"/>
        <end position="119"/>
    </location>
    <ligand>
        <name>NAD(+)</name>
        <dbReference type="ChEBI" id="CHEBI:57540"/>
    </ligand>
</feature>
<feature type="binding site" evidence="1">
    <location>
        <position position="119"/>
    </location>
    <ligand>
        <name>substrate</name>
    </ligand>
</feature>
<feature type="binding site" evidence="1">
    <location>
        <position position="150"/>
    </location>
    <ligand>
        <name>substrate</name>
    </ligand>
</feature>
<name>MDH_CHLL3</name>